<proteinExistence type="evidence at protein level"/>
<evidence type="ECO:0000250" key="1"/>
<evidence type="ECO:0000255" key="2"/>
<evidence type="ECO:0000269" key="3">
    <source>
    </source>
</evidence>
<evidence type="ECO:0000305" key="4"/>
<gene>
    <name type="primary">Ndc1</name>
    <name type="ORF">CG5857</name>
</gene>
<dbReference type="EMBL" id="DQ141697">
    <property type="protein sequence ID" value="AAZ73088.1"/>
    <property type="molecule type" value="mRNA"/>
</dbReference>
<dbReference type="EMBL" id="AE014297">
    <property type="protein sequence ID" value="AAF56202.1"/>
    <property type="molecule type" value="Genomic_DNA"/>
</dbReference>
<dbReference type="EMBL" id="AY061468">
    <property type="protein sequence ID" value="AAL29016.1"/>
    <property type="molecule type" value="mRNA"/>
</dbReference>
<dbReference type="RefSeq" id="NP_651191.1">
    <property type="nucleotide sequence ID" value="NM_142934.4"/>
</dbReference>
<dbReference type="SMR" id="Q9VCG4"/>
<dbReference type="BioGRID" id="67761">
    <property type="interactions" value="6"/>
</dbReference>
<dbReference type="ComplexPortal" id="CPX-2568">
    <property type="entry name" value="Nuclear pore complex"/>
</dbReference>
<dbReference type="FunCoup" id="Q9VCG4">
    <property type="interactions" value="1850"/>
</dbReference>
<dbReference type="IntAct" id="Q9VCG4">
    <property type="interactions" value="1"/>
</dbReference>
<dbReference type="STRING" id="7227.FBpp0083879"/>
<dbReference type="iPTMnet" id="Q9VCG4"/>
<dbReference type="PaxDb" id="7227-FBpp0083879"/>
<dbReference type="DNASU" id="42825"/>
<dbReference type="EnsemblMetazoa" id="FBtr0084491">
    <property type="protein sequence ID" value="FBpp0083879"/>
    <property type="gene ID" value="FBgn0039125"/>
</dbReference>
<dbReference type="GeneID" id="42825"/>
<dbReference type="KEGG" id="dme:Dmel_CG5857"/>
<dbReference type="UCSC" id="CG5857-RA">
    <property type="organism name" value="d. melanogaster"/>
</dbReference>
<dbReference type="AGR" id="FB:FBgn0039125"/>
<dbReference type="CTD" id="55706"/>
<dbReference type="FlyBase" id="FBgn0039125">
    <property type="gene designation" value="Ndc1"/>
</dbReference>
<dbReference type="VEuPathDB" id="VectorBase:FBgn0039125"/>
<dbReference type="eggNOG" id="KOG4358">
    <property type="taxonomic scope" value="Eukaryota"/>
</dbReference>
<dbReference type="GeneTree" id="ENSGT00390000014590"/>
<dbReference type="HOGENOM" id="CLU_027343_0_0_1"/>
<dbReference type="InParanoid" id="Q9VCG4"/>
<dbReference type="OMA" id="ILCQQHL"/>
<dbReference type="OrthoDB" id="67850at2759"/>
<dbReference type="PhylomeDB" id="Q9VCG4"/>
<dbReference type="Reactome" id="R-DME-159227">
    <property type="pathway name" value="Transport of the SLBP independent Mature mRNA"/>
</dbReference>
<dbReference type="Reactome" id="R-DME-159230">
    <property type="pathway name" value="Transport of the SLBP Dependant Mature mRNA"/>
</dbReference>
<dbReference type="Reactome" id="R-DME-159231">
    <property type="pathway name" value="Transport of Mature mRNA Derived from an Intronless Transcript"/>
</dbReference>
<dbReference type="Reactome" id="R-DME-159236">
    <property type="pathway name" value="Transport of Mature mRNA derived from an Intron-Containing Transcript"/>
</dbReference>
<dbReference type="Reactome" id="R-DME-3108214">
    <property type="pathway name" value="SUMOylation of DNA damage response and repair proteins"/>
</dbReference>
<dbReference type="Reactome" id="R-DME-3301854">
    <property type="pathway name" value="Nuclear Pore Complex (NPC) Disassembly"/>
</dbReference>
<dbReference type="Reactome" id="R-DME-4085377">
    <property type="pathway name" value="SUMOylation of SUMOylation proteins"/>
</dbReference>
<dbReference type="Reactome" id="R-DME-4551638">
    <property type="pathway name" value="SUMOylation of chromatin organization proteins"/>
</dbReference>
<dbReference type="Reactome" id="R-DME-4615885">
    <property type="pathway name" value="SUMOylation of DNA replication proteins"/>
</dbReference>
<dbReference type="Reactome" id="R-DME-5578749">
    <property type="pathway name" value="Transcriptional regulation by small RNAs"/>
</dbReference>
<dbReference type="Reactome" id="R-DME-9615933">
    <property type="pathway name" value="Postmitotic nuclear pore complex (NPC) reformation"/>
</dbReference>
<dbReference type="BioGRID-ORCS" id="42825">
    <property type="hits" value="1 hit in 1 CRISPR screen"/>
</dbReference>
<dbReference type="GenomeRNAi" id="42825"/>
<dbReference type="PRO" id="PR:Q9VCG4"/>
<dbReference type="Proteomes" id="UP000000803">
    <property type="component" value="Chromosome 3R"/>
</dbReference>
<dbReference type="Bgee" id="FBgn0039125">
    <property type="expression patterns" value="Expressed in wing disc and 51 other cell types or tissues"/>
</dbReference>
<dbReference type="GO" id="GO:0012505">
    <property type="term" value="C:endomembrane system"/>
    <property type="evidence" value="ECO:0007005"/>
    <property type="project" value="FlyBase"/>
</dbReference>
<dbReference type="GO" id="GO:0031965">
    <property type="term" value="C:nuclear membrane"/>
    <property type="evidence" value="ECO:0007669"/>
    <property type="project" value="UniProtKB-SubCell"/>
</dbReference>
<dbReference type="GO" id="GO:0005643">
    <property type="term" value="C:nuclear pore"/>
    <property type="evidence" value="ECO:0000250"/>
    <property type="project" value="FlyBase"/>
</dbReference>
<dbReference type="GO" id="GO:0070762">
    <property type="term" value="C:nuclear pore transmembrane ring"/>
    <property type="evidence" value="ECO:0000318"/>
    <property type="project" value="GO_Central"/>
</dbReference>
<dbReference type="GO" id="GO:0030674">
    <property type="term" value="F:protein-macromolecule adaptor activity"/>
    <property type="evidence" value="ECO:0000318"/>
    <property type="project" value="GO_Central"/>
</dbReference>
<dbReference type="GO" id="GO:0017056">
    <property type="term" value="F:structural constituent of nuclear pore"/>
    <property type="evidence" value="ECO:0000250"/>
    <property type="project" value="FlyBase"/>
</dbReference>
<dbReference type="GO" id="GO:0051028">
    <property type="term" value="P:mRNA transport"/>
    <property type="evidence" value="ECO:0007669"/>
    <property type="project" value="UniProtKB-KW"/>
</dbReference>
<dbReference type="GO" id="GO:0051292">
    <property type="term" value="P:nuclear pore complex assembly"/>
    <property type="evidence" value="ECO:0000250"/>
    <property type="project" value="FlyBase"/>
</dbReference>
<dbReference type="GO" id="GO:0006999">
    <property type="term" value="P:nuclear pore organization"/>
    <property type="evidence" value="ECO:0000318"/>
    <property type="project" value="GO_Central"/>
</dbReference>
<dbReference type="GO" id="GO:0015031">
    <property type="term" value="P:protein transport"/>
    <property type="evidence" value="ECO:0007669"/>
    <property type="project" value="UniProtKB-KW"/>
</dbReference>
<dbReference type="InterPro" id="IPR019049">
    <property type="entry name" value="Nucleoporin_prot_Ndc1/Nup"/>
</dbReference>
<dbReference type="PANTHER" id="PTHR13269">
    <property type="entry name" value="NUCLEOPORIN NDC1"/>
    <property type="match status" value="1"/>
</dbReference>
<dbReference type="PANTHER" id="PTHR13269:SF6">
    <property type="entry name" value="NUCLEOPORIN NDC1"/>
    <property type="match status" value="1"/>
</dbReference>
<dbReference type="Pfam" id="PF09531">
    <property type="entry name" value="Ndc1_Nup"/>
    <property type="match status" value="1"/>
</dbReference>
<keyword id="KW-0472">Membrane</keyword>
<keyword id="KW-0509">mRNA transport</keyword>
<keyword id="KW-0906">Nuclear pore complex</keyword>
<keyword id="KW-0539">Nucleus</keyword>
<keyword id="KW-0597">Phosphoprotein</keyword>
<keyword id="KW-0653">Protein transport</keyword>
<keyword id="KW-1185">Reference proteome</keyword>
<keyword id="KW-0811">Translocation</keyword>
<keyword id="KW-0812">Transmembrane</keyword>
<keyword id="KW-1133">Transmembrane helix</keyword>
<keyword id="KW-0813">Transport</keyword>
<sequence length="578" mass="65387">MSASSSSNACKLLLLGRCLRAVLLSVAIQFLLLTVFLLFVNFQLLHPLAWVTGTLRLVASWYTWFASIPLVASVVLYGVILCQQHLSERRYCPTRYRWLLHYGPRKVLFLFAHLLVGLLTAWLYTGYLHTDYQHLKYKCYGQDCISAYNVYLLGIGMTAGCYYFVSVHMRKEISIEFPIVEQSRAEKMRELLYASLAKSLLSSLLPTISYTAVFCLFGPMVCHRLSHILSVDMDERLDGFFGVVTNVRLLFYGYLLTAQILSNMHLMRCFYGILLSEDLPLVVTKPRAAFAHEQDITLVAGLGVFNVYVVQCLAAHHFYKLALRKNSPQRAEIFQLTEPGNRPASWRSLCDQCLSILGSFTEELTESMQKISILKCAQSLPMPKITESLTTSLMAEKVLLRQYNQKHGIRPIVSPSREVAVESPADGIRHFPNWCERVSTQLEQSLQRLLQRVPGIVYLFNEPEGAKTTFLLANSLPVVYMTQALAQVCAASLKEDPYGVVQNDLPAIIKAINKLRNELDKLSSVIGNIRISSSSFNVLRCAVRRSLYAICLSFCDYLDDLLPPGEELRQLQDLVCQE</sequence>
<reference key="1">
    <citation type="submission" date="2005-07" db="EMBL/GenBank/DDBJ databases">
        <title>Characterization of NDC1 from metazoa.</title>
        <authorList>
            <person name="Stavru F."/>
            <person name="Goerlich D."/>
            <person name="Hartmann E."/>
        </authorList>
    </citation>
    <scope>NUCLEOTIDE SEQUENCE [MRNA]</scope>
</reference>
<reference key="2">
    <citation type="journal article" date="2000" name="Science">
        <title>The genome sequence of Drosophila melanogaster.</title>
        <authorList>
            <person name="Adams M.D."/>
            <person name="Celniker S.E."/>
            <person name="Holt R.A."/>
            <person name="Evans C.A."/>
            <person name="Gocayne J.D."/>
            <person name="Amanatides P.G."/>
            <person name="Scherer S.E."/>
            <person name="Li P.W."/>
            <person name="Hoskins R.A."/>
            <person name="Galle R.F."/>
            <person name="George R.A."/>
            <person name="Lewis S.E."/>
            <person name="Richards S."/>
            <person name="Ashburner M."/>
            <person name="Henderson S.N."/>
            <person name="Sutton G.G."/>
            <person name="Wortman J.R."/>
            <person name="Yandell M.D."/>
            <person name="Zhang Q."/>
            <person name="Chen L.X."/>
            <person name="Brandon R.C."/>
            <person name="Rogers Y.-H.C."/>
            <person name="Blazej R.G."/>
            <person name="Champe M."/>
            <person name="Pfeiffer B.D."/>
            <person name="Wan K.H."/>
            <person name="Doyle C."/>
            <person name="Baxter E.G."/>
            <person name="Helt G."/>
            <person name="Nelson C.R."/>
            <person name="Miklos G.L.G."/>
            <person name="Abril J.F."/>
            <person name="Agbayani A."/>
            <person name="An H.-J."/>
            <person name="Andrews-Pfannkoch C."/>
            <person name="Baldwin D."/>
            <person name="Ballew R.M."/>
            <person name="Basu A."/>
            <person name="Baxendale J."/>
            <person name="Bayraktaroglu L."/>
            <person name="Beasley E.M."/>
            <person name="Beeson K.Y."/>
            <person name="Benos P.V."/>
            <person name="Berman B.P."/>
            <person name="Bhandari D."/>
            <person name="Bolshakov S."/>
            <person name="Borkova D."/>
            <person name="Botchan M.R."/>
            <person name="Bouck J."/>
            <person name="Brokstein P."/>
            <person name="Brottier P."/>
            <person name="Burtis K.C."/>
            <person name="Busam D.A."/>
            <person name="Butler H."/>
            <person name="Cadieu E."/>
            <person name="Center A."/>
            <person name="Chandra I."/>
            <person name="Cherry J.M."/>
            <person name="Cawley S."/>
            <person name="Dahlke C."/>
            <person name="Davenport L.B."/>
            <person name="Davies P."/>
            <person name="de Pablos B."/>
            <person name="Delcher A."/>
            <person name="Deng Z."/>
            <person name="Mays A.D."/>
            <person name="Dew I."/>
            <person name="Dietz S.M."/>
            <person name="Dodson K."/>
            <person name="Doup L.E."/>
            <person name="Downes M."/>
            <person name="Dugan-Rocha S."/>
            <person name="Dunkov B.C."/>
            <person name="Dunn P."/>
            <person name="Durbin K.J."/>
            <person name="Evangelista C.C."/>
            <person name="Ferraz C."/>
            <person name="Ferriera S."/>
            <person name="Fleischmann W."/>
            <person name="Fosler C."/>
            <person name="Gabrielian A.E."/>
            <person name="Garg N.S."/>
            <person name="Gelbart W.M."/>
            <person name="Glasser K."/>
            <person name="Glodek A."/>
            <person name="Gong F."/>
            <person name="Gorrell J.H."/>
            <person name="Gu Z."/>
            <person name="Guan P."/>
            <person name="Harris M."/>
            <person name="Harris N.L."/>
            <person name="Harvey D.A."/>
            <person name="Heiman T.J."/>
            <person name="Hernandez J.R."/>
            <person name="Houck J."/>
            <person name="Hostin D."/>
            <person name="Houston K.A."/>
            <person name="Howland T.J."/>
            <person name="Wei M.-H."/>
            <person name="Ibegwam C."/>
            <person name="Jalali M."/>
            <person name="Kalush F."/>
            <person name="Karpen G.H."/>
            <person name="Ke Z."/>
            <person name="Kennison J.A."/>
            <person name="Ketchum K.A."/>
            <person name="Kimmel B.E."/>
            <person name="Kodira C.D."/>
            <person name="Kraft C.L."/>
            <person name="Kravitz S."/>
            <person name="Kulp D."/>
            <person name="Lai Z."/>
            <person name="Lasko P."/>
            <person name="Lei Y."/>
            <person name="Levitsky A.A."/>
            <person name="Li J.H."/>
            <person name="Li Z."/>
            <person name="Liang Y."/>
            <person name="Lin X."/>
            <person name="Liu X."/>
            <person name="Mattei B."/>
            <person name="McIntosh T.C."/>
            <person name="McLeod M.P."/>
            <person name="McPherson D."/>
            <person name="Merkulov G."/>
            <person name="Milshina N.V."/>
            <person name="Mobarry C."/>
            <person name="Morris J."/>
            <person name="Moshrefi A."/>
            <person name="Mount S.M."/>
            <person name="Moy M."/>
            <person name="Murphy B."/>
            <person name="Murphy L."/>
            <person name="Muzny D.M."/>
            <person name="Nelson D.L."/>
            <person name="Nelson D.R."/>
            <person name="Nelson K.A."/>
            <person name="Nixon K."/>
            <person name="Nusskern D.R."/>
            <person name="Pacleb J.M."/>
            <person name="Palazzolo M."/>
            <person name="Pittman G.S."/>
            <person name="Pan S."/>
            <person name="Pollard J."/>
            <person name="Puri V."/>
            <person name="Reese M.G."/>
            <person name="Reinert K."/>
            <person name="Remington K."/>
            <person name="Saunders R.D.C."/>
            <person name="Scheeler F."/>
            <person name="Shen H."/>
            <person name="Shue B.C."/>
            <person name="Siden-Kiamos I."/>
            <person name="Simpson M."/>
            <person name="Skupski M.P."/>
            <person name="Smith T.J."/>
            <person name="Spier E."/>
            <person name="Spradling A.C."/>
            <person name="Stapleton M."/>
            <person name="Strong R."/>
            <person name="Sun E."/>
            <person name="Svirskas R."/>
            <person name="Tector C."/>
            <person name="Turner R."/>
            <person name="Venter E."/>
            <person name="Wang A.H."/>
            <person name="Wang X."/>
            <person name="Wang Z.-Y."/>
            <person name="Wassarman D.A."/>
            <person name="Weinstock G.M."/>
            <person name="Weissenbach J."/>
            <person name="Williams S.M."/>
            <person name="Woodage T."/>
            <person name="Worley K.C."/>
            <person name="Wu D."/>
            <person name="Yang S."/>
            <person name="Yao Q.A."/>
            <person name="Ye J."/>
            <person name="Yeh R.-F."/>
            <person name="Zaveri J.S."/>
            <person name="Zhan M."/>
            <person name="Zhang G."/>
            <person name="Zhao Q."/>
            <person name="Zheng L."/>
            <person name="Zheng X.H."/>
            <person name="Zhong F.N."/>
            <person name="Zhong W."/>
            <person name="Zhou X."/>
            <person name="Zhu S.C."/>
            <person name="Zhu X."/>
            <person name="Smith H.O."/>
            <person name="Gibbs R.A."/>
            <person name="Myers E.W."/>
            <person name="Rubin G.M."/>
            <person name="Venter J.C."/>
        </authorList>
    </citation>
    <scope>NUCLEOTIDE SEQUENCE [LARGE SCALE GENOMIC DNA]</scope>
    <source>
        <strain>Berkeley</strain>
    </source>
</reference>
<reference key="3">
    <citation type="journal article" date="2002" name="Genome Biol.">
        <title>Annotation of the Drosophila melanogaster euchromatic genome: a systematic review.</title>
        <authorList>
            <person name="Misra S."/>
            <person name="Crosby M.A."/>
            <person name="Mungall C.J."/>
            <person name="Matthews B.B."/>
            <person name="Campbell K.S."/>
            <person name="Hradecky P."/>
            <person name="Huang Y."/>
            <person name="Kaminker J.S."/>
            <person name="Millburn G.H."/>
            <person name="Prochnik S.E."/>
            <person name="Smith C.D."/>
            <person name="Tupy J.L."/>
            <person name="Whitfield E.J."/>
            <person name="Bayraktaroglu L."/>
            <person name="Berman B.P."/>
            <person name="Bettencourt B.R."/>
            <person name="Celniker S.E."/>
            <person name="de Grey A.D.N.J."/>
            <person name="Drysdale R.A."/>
            <person name="Harris N.L."/>
            <person name="Richter J."/>
            <person name="Russo S."/>
            <person name="Schroeder A.J."/>
            <person name="Shu S.Q."/>
            <person name="Stapleton M."/>
            <person name="Yamada C."/>
            <person name="Ashburner M."/>
            <person name="Gelbart W.M."/>
            <person name="Rubin G.M."/>
            <person name="Lewis S.E."/>
        </authorList>
    </citation>
    <scope>GENOME REANNOTATION</scope>
    <source>
        <strain>Berkeley</strain>
    </source>
</reference>
<reference key="4">
    <citation type="journal article" date="2002" name="Genome Biol.">
        <title>A Drosophila full-length cDNA resource.</title>
        <authorList>
            <person name="Stapleton M."/>
            <person name="Carlson J.W."/>
            <person name="Brokstein P."/>
            <person name="Yu C."/>
            <person name="Champe M."/>
            <person name="George R.A."/>
            <person name="Guarin H."/>
            <person name="Kronmiller B."/>
            <person name="Pacleb J.M."/>
            <person name="Park S."/>
            <person name="Wan K.H."/>
            <person name="Rubin G.M."/>
            <person name="Celniker S.E."/>
        </authorList>
    </citation>
    <scope>NUCLEOTIDE SEQUENCE [LARGE SCALE MRNA]</scope>
    <source>
        <strain>Berkeley</strain>
        <tissue>Embryo</tissue>
    </source>
</reference>
<reference key="5">
    <citation type="journal article" date="2008" name="J. Proteome Res.">
        <title>Phosphoproteome analysis of Drosophila melanogaster embryos.</title>
        <authorList>
            <person name="Zhai B."/>
            <person name="Villen J."/>
            <person name="Beausoleil S.A."/>
            <person name="Mintseris J."/>
            <person name="Gygi S.P."/>
        </authorList>
    </citation>
    <scope>PHOSPHORYLATION [LARGE SCALE ANALYSIS] AT SER-414</scope>
    <scope>IDENTIFICATION BY MASS SPECTROMETRY</scope>
    <source>
        <tissue>Embryo</tissue>
    </source>
</reference>
<comment type="function">
    <text evidence="1">Component of the nuclear pore complex (NPC), which plays a key role in de novo assembly and insertion of NPC in the nuclear envelope.</text>
</comment>
<comment type="subcellular location">
    <subcellularLocation>
        <location evidence="1">Nucleus</location>
        <location evidence="1">Nuclear pore complex</location>
    </subcellularLocation>
    <subcellularLocation>
        <location evidence="1">Nucleus membrane</location>
        <topology evidence="1">Multi-pass membrane protein</topology>
    </subcellularLocation>
    <text evidence="1">Central core structure of the nuclear pore complex.</text>
</comment>
<comment type="similarity">
    <text evidence="4">Belongs to the NDC1 family.</text>
</comment>
<name>NDC1_DROME</name>
<protein>
    <recommendedName>
        <fullName>Nucleoporin Ndc1</fullName>
    </recommendedName>
</protein>
<organism>
    <name type="scientific">Drosophila melanogaster</name>
    <name type="common">Fruit fly</name>
    <dbReference type="NCBI Taxonomy" id="7227"/>
    <lineage>
        <taxon>Eukaryota</taxon>
        <taxon>Metazoa</taxon>
        <taxon>Ecdysozoa</taxon>
        <taxon>Arthropoda</taxon>
        <taxon>Hexapoda</taxon>
        <taxon>Insecta</taxon>
        <taxon>Pterygota</taxon>
        <taxon>Neoptera</taxon>
        <taxon>Endopterygota</taxon>
        <taxon>Diptera</taxon>
        <taxon>Brachycera</taxon>
        <taxon>Muscomorpha</taxon>
        <taxon>Ephydroidea</taxon>
        <taxon>Drosophilidae</taxon>
        <taxon>Drosophila</taxon>
        <taxon>Sophophora</taxon>
    </lineage>
</organism>
<feature type="chain" id="PRO_0000235248" description="Nucleoporin Ndc1">
    <location>
        <begin position="1"/>
        <end position="578"/>
    </location>
</feature>
<feature type="topological domain" description="Cytoplasmic" evidence="2">
    <location>
        <begin position="1"/>
        <end position="21"/>
    </location>
</feature>
<feature type="transmembrane region" description="Helical; Name=1" evidence="2">
    <location>
        <begin position="22"/>
        <end position="42"/>
    </location>
</feature>
<feature type="topological domain" description="Perinuclear space" evidence="2">
    <location>
        <begin position="43"/>
        <end position="60"/>
    </location>
</feature>
<feature type="transmembrane region" description="Helical; Name=2" evidence="2">
    <location>
        <begin position="61"/>
        <end position="81"/>
    </location>
</feature>
<feature type="topological domain" description="Cytoplasmic" evidence="2">
    <location>
        <begin position="82"/>
        <end position="106"/>
    </location>
</feature>
<feature type="transmembrane region" description="Helical; Name=3" evidence="2">
    <location>
        <begin position="107"/>
        <end position="127"/>
    </location>
</feature>
<feature type="topological domain" description="Perinuclear space" evidence="2">
    <location>
        <begin position="128"/>
        <end position="144"/>
    </location>
</feature>
<feature type="transmembrane region" description="Helical; Name=4" evidence="2">
    <location>
        <begin position="145"/>
        <end position="165"/>
    </location>
</feature>
<feature type="topological domain" description="Cytoplasmic" evidence="2">
    <location>
        <begin position="166"/>
        <end position="200"/>
    </location>
</feature>
<feature type="transmembrane region" description="Helical; Name=5" evidence="2">
    <location>
        <begin position="201"/>
        <end position="221"/>
    </location>
</feature>
<feature type="topological domain" description="Perinuclear space" evidence="2">
    <location>
        <begin position="222"/>
        <end position="239"/>
    </location>
</feature>
<feature type="transmembrane region" description="Helical; Name=6" evidence="2">
    <location>
        <begin position="240"/>
        <end position="260"/>
    </location>
</feature>
<feature type="topological domain" description="Cytoplasmic" evidence="2">
    <location>
        <begin position="261"/>
        <end position="578"/>
    </location>
</feature>
<feature type="modified residue" description="Phosphoserine" evidence="3">
    <location>
        <position position="414"/>
    </location>
</feature>
<feature type="sequence conflict" description="In Ref. 1; AAZ73088." evidence="4" ref="1">
    <original>RV</original>
    <variation>LL</variation>
    <location>
        <begin position="437"/>
        <end position="438"/>
    </location>
</feature>
<accession>Q9VCG4</accession>
<accession>Q3YE69</accession>